<accession>Q57927</accession>
<organism>
    <name type="scientific">Methanocaldococcus jannaschii (strain ATCC 43067 / DSM 2661 / JAL-1 / JCM 10045 / NBRC 100440)</name>
    <name type="common">Methanococcus jannaschii</name>
    <dbReference type="NCBI Taxonomy" id="243232"/>
    <lineage>
        <taxon>Archaea</taxon>
        <taxon>Methanobacteriati</taxon>
        <taxon>Methanobacteriota</taxon>
        <taxon>Methanomada group</taxon>
        <taxon>Methanococci</taxon>
        <taxon>Methanococcales</taxon>
        <taxon>Methanocaldococcaceae</taxon>
        <taxon>Methanocaldococcus</taxon>
    </lineage>
</organism>
<sequence length="196" mass="21452">MKLFDYPGIQNTDETLKIAVERAKKGDIKSIVVASSTGYTAKKLLDLLEKEGLDLNVVVVTYHQGFHGEDTISMDKEVEEELKKRGAKVFRGSHALSGVERGISNKLGGYGPVQVIAETLRTFGQGVKVCYEITIMACDAGLIKAKEEVIAIGGTGRGADTAMVIKPANMNTFFNIEAREILCMPRIKKKVKEDDE</sequence>
<gene>
    <name type="ordered locus">MJ0504</name>
</gene>
<proteinExistence type="predicted"/>
<name>Y504_METJA</name>
<dbReference type="EMBL" id="L77117">
    <property type="protein sequence ID" value="AAB98495.1"/>
    <property type="molecule type" value="Genomic_DNA"/>
</dbReference>
<dbReference type="PIR" id="H64362">
    <property type="entry name" value="H64362"/>
</dbReference>
<dbReference type="RefSeq" id="WP_010870005.1">
    <property type="nucleotide sequence ID" value="NC_000909.1"/>
</dbReference>
<dbReference type="STRING" id="243232.MJ_0504"/>
<dbReference type="PaxDb" id="243232-MJ_0504"/>
<dbReference type="EnsemblBacteria" id="AAB98495">
    <property type="protein sequence ID" value="AAB98495"/>
    <property type="gene ID" value="MJ_0504"/>
</dbReference>
<dbReference type="GeneID" id="1451366"/>
<dbReference type="KEGG" id="mja:MJ_0504"/>
<dbReference type="eggNOG" id="arCOG04343">
    <property type="taxonomic scope" value="Archaea"/>
</dbReference>
<dbReference type="HOGENOM" id="CLU_095207_1_0_2"/>
<dbReference type="InParanoid" id="Q57927"/>
<dbReference type="OrthoDB" id="64834at2157"/>
<dbReference type="PhylomeDB" id="Q57927"/>
<dbReference type="Proteomes" id="UP000000805">
    <property type="component" value="Chromosome"/>
</dbReference>
<dbReference type="Gene3D" id="3.40.1380.20">
    <property type="entry name" value="Pyruvate kinase, C-terminal domain"/>
    <property type="match status" value="1"/>
</dbReference>
<dbReference type="InterPro" id="IPR015074">
    <property type="entry name" value="DUF1867"/>
</dbReference>
<dbReference type="InterPro" id="IPR015795">
    <property type="entry name" value="Pyrv_Knase_C"/>
</dbReference>
<dbReference type="InterPro" id="IPR036918">
    <property type="entry name" value="Pyrv_Knase_C_sf"/>
</dbReference>
<dbReference type="Pfam" id="PF02887">
    <property type="entry name" value="PK_C"/>
    <property type="match status" value="1"/>
</dbReference>
<dbReference type="PIRSF" id="PIRSF016138">
    <property type="entry name" value="UCP016138"/>
    <property type="match status" value="1"/>
</dbReference>
<dbReference type="SUPFAM" id="SSF52935">
    <property type="entry name" value="PK C-terminal domain-like"/>
    <property type="match status" value="1"/>
</dbReference>
<protein>
    <recommendedName>
        <fullName>Uncharacterized protein MJ0504</fullName>
    </recommendedName>
</protein>
<keyword id="KW-1185">Reference proteome</keyword>
<feature type="chain" id="PRO_0000106903" description="Uncharacterized protein MJ0504">
    <location>
        <begin position="1"/>
        <end position="196"/>
    </location>
</feature>
<reference key="1">
    <citation type="journal article" date="1996" name="Science">
        <title>Complete genome sequence of the methanogenic archaeon, Methanococcus jannaschii.</title>
        <authorList>
            <person name="Bult C.J."/>
            <person name="White O."/>
            <person name="Olsen G.J."/>
            <person name="Zhou L."/>
            <person name="Fleischmann R.D."/>
            <person name="Sutton G.G."/>
            <person name="Blake J.A."/>
            <person name="FitzGerald L.M."/>
            <person name="Clayton R.A."/>
            <person name="Gocayne J.D."/>
            <person name="Kerlavage A.R."/>
            <person name="Dougherty B.A."/>
            <person name="Tomb J.-F."/>
            <person name="Adams M.D."/>
            <person name="Reich C.I."/>
            <person name="Overbeek R."/>
            <person name="Kirkness E.F."/>
            <person name="Weinstock K.G."/>
            <person name="Merrick J.M."/>
            <person name="Glodek A."/>
            <person name="Scott J.L."/>
            <person name="Geoghagen N.S.M."/>
            <person name="Weidman J.F."/>
            <person name="Fuhrmann J.L."/>
            <person name="Nguyen D."/>
            <person name="Utterback T.R."/>
            <person name="Kelley J.M."/>
            <person name="Peterson J.D."/>
            <person name="Sadow P.W."/>
            <person name="Hanna M.C."/>
            <person name="Cotton M.D."/>
            <person name="Roberts K.M."/>
            <person name="Hurst M.A."/>
            <person name="Kaine B.P."/>
            <person name="Borodovsky M."/>
            <person name="Klenk H.-P."/>
            <person name="Fraser C.M."/>
            <person name="Smith H.O."/>
            <person name="Woese C.R."/>
            <person name="Venter J.C."/>
        </authorList>
    </citation>
    <scope>NUCLEOTIDE SEQUENCE [LARGE SCALE GENOMIC DNA]</scope>
    <source>
        <strain>ATCC 43067 / DSM 2661 / JAL-1 / JCM 10045 / NBRC 100440</strain>
    </source>
</reference>